<gene>
    <name evidence="1" type="primary">tyrS</name>
    <name type="ordered locus">SPP_2155</name>
</gene>
<proteinExistence type="inferred from homology"/>
<evidence type="ECO:0000255" key="1">
    <source>
        <dbReference type="HAMAP-Rule" id="MF_02006"/>
    </source>
</evidence>
<feature type="chain" id="PRO_1000189342" description="Tyrosine--tRNA ligase">
    <location>
        <begin position="1"/>
        <end position="418"/>
    </location>
</feature>
<feature type="domain" description="S4 RNA-binding" evidence="1">
    <location>
        <begin position="352"/>
        <end position="418"/>
    </location>
</feature>
<feature type="short sequence motif" description="'HIGH' region">
    <location>
        <begin position="39"/>
        <end position="48"/>
    </location>
</feature>
<feature type="short sequence motif" description="'KMSKS' region">
    <location>
        <begin position="229"/>
        <end position="233"/>
    </location>
</feature>
<feature type="binding site" evidence="1">
    <location>
        <position position="34"/>
    </location>
    <ligand>
        <name>L-tyrosine</name>
        <dbReference type="ChEBI" id="CHEBI:58315"/>
    </ligand>
</feature>
<feature type="binding site" evidence="1">
    <location>
        <position position="169"/>
    </location>
    <ligand>
        <name>L-tyrosine</name>
        <dbReference type="ChEBI" id="CHEBI:58315"/>
    </ligand>
</feature>
<feature type="binding site" evidence="1">
    <location>
        <position position="173"/>
    </location>
    <ligand>
        <name>L-tyrosine</name>
        <dbReference type="ChEBI" id="CHEBI:58315"/>
    </ligand>
</feature>
<feature type="binding site" evidence="1">
    <location>
        <position position="232"/>
    </location>
    <ligand>
        <name>ATP</name>
        <dbReference type="ChEBI" id="CHEBI:30616"/>
    </ligand>
</feature>
<protein>
    <recommendedName>
        <fullName evidence="1">Tyrosine--tRNA ligase</fullName>
        <ecNumber evidence="1">6.1.1.1</ecNumber>
    </recommendedName>
    <alternativeName>
        <fullName evidence="1">Tyrosyl-tRNA synthetase</fullName>
        <shortName evidence="1">TyrRS</shortName>
    </alternativeName>
</protein>
<sequence length="418" mass="47481">MHIFDELKERGLIFQTTDEEALRKALEEGQVSYYTGYDPTADSLHLGHLVAILTSRRLQLAGHKPYALVGGATGLIGDPSFKDAERSLQTKDTVDGWVKSIQGQLSRFLDFENGENKAVMVNNYDWFGSISFIDFLRDIGKYFTVNYMMSKESVKKRIETGISYTEFAYQIMQGYDFFVLNQDHNVTLQIGGSDQWGNMTAGTELLRRKADKTGHVITVPLITDATGKKFGKSEGNAVWLNPEKTSPYEMYQFWMNVMDADAVRFLKIFTFLSLDEIEDIRKQFEAAPHERLAQKVLAREVVTLVHGEEAYKEALNITEQLFAGNIKNLSVKELKQGLRGVPNYQVQADENNNIVELLVSSGIVNSKRQAREDVQNGAIYVNGDRIQELDYVLSDADKLENELTVIRRGKKKYFVLTY</sequence>
<dbReference type="EC" id="6.1.1.1" evidence="1"/>
<dbReference type="EMBL" id="CP000920">
    <property type="protein sequence ID" value="ACO20518.1"/>
    <property type="molecule type" value="Genomic_DNA"/>
</dbReference>
<dbReference type="RefSeq" id="WP_000546887.1">
    <property type="nucleotide sequence ID" value="NC_012467.1"/>
</dbReference>
<dbReference type="SMR" id="C1CN46"/>
<dbReference type="KEGG" id="spp:SPP_2155"/>
<dbReference type="HOGENOM" id="CLU_024003_0_3_9"/>
<dbReference type="GO" id="GO:0005829">
    <property type="term" value="C:cytosol"/>
    <property type="evidence" value="ECO:0007669"/>
    <property type="project" value="TreeGrafter"/>
</dbReference>
<dbReference type="GO" id="GO:0005524">
    <property type="term" value="F:ATP binding"/>
    <property type="evidence" value="ECO:0007669"/>
    <property type="project" value="UniProtKB-UniRule"/>
</dbReference>
<dbReference type="GO" id="GO:0003723">
    <property type="term" value="F:RNA binding"/>
    <property type="evidence" value="ECO:0007669"/>
    <property type="project" value="UniProtKB-KW"/>
</dbReference>
<dbReference type="GO" id="GO:0004831">
    <property type="term" value="F:tyrosine-tRNA ligase activity"/>
    <property type="evidence" value="ECO:0007669"/>
    <property type="project" value="UniProtKB-UniRule"/>
</dbReference>
<dbReference type="GO" id="GO:0006437">
    <property type="term" value="P:tyrosyl-tRNA aminoacylation"/>
    <property type="evidence" value="ECO:0007669"/>
    <property type="project" value="UniProtKB-UniRule"/>
</dbReference>
<dbReference type="CDD" id="cd00165">
    <property type="entry name" value="S4"/>
    <property type="match status" value="1"/>
</dbReference>
<dbReference type="CDD" id="cd00805">
    <property type="entry name" value="TyrRS_core"/>
    <property type="match status" value="1"/>
</dbReference>
<dbReference type="FunFam" id="1.10.240.10:FF:000001">
    <property type="entry name" value="Tyrosine--tRNA ligase"/>
    <property type="match status" value="1"/>
</dbReference>
<dbReference type="FunFam" id="3.10.290.10:FF:000012">
    <property type="entry name" value="Tyrosine--tRNA ligase"/>
    <property type="match status" value="1"/>
</dbReference>
<dbReference type="FunFam" id="3.40.50.620:FF:000008">
    <property type="entry name" value="Tyrosine--tRNA ligase"/>
    <property type="match status" value="1"/>
</dbReference>
<dbReference type="Gene3D" id="3.40.50.620">
    <property type="entry name" value="HUPs"/>
    <property type="match status" value="1"/>
</dbReference>
<dbReference type="Gene3D" id="3.10.290.10">
    <property type="entry name" value="RNA-binding S4 domain"/>
    <property type="match status" value="1"/>
</dbReference>
<dbReference type="Gene3D" id="1.10.240.10">
    <property type="entry name" value="Tyrosyl-Transfer RNA Synthetase"/>
    <property type="match status" value="1"/>
</dbReference>
<dbReference type="HAMAP" id="MF_02006">
    <property type="entry name" value="Tyr_tRNA_synth_type1"/>
    <property type="match status" value="1"/>
</dbReference>
<dbReference type="InterPro" id="IPR001412">
    <property type="entry name" value="aa-tRNA-synth_I_CS"/>
</dbReference>
<dbReference type="InterPro" id="IPR002305">
    <property type="entry name" value="aa-tRNA-synth_Ic"/>
</dbReference>
<dbReference type="InterPro" id="IPR014729">
    <property type="entry name" value="Rossmann-like_a/b/a_fold"/>
</dbReference>
<dbReference type="InterPro" id="IPR002942">
    <property type="entry name" value="S4_RNA-bd"/>
</dbReference>
<dbReference type="InterPro" id="IPR036986">
    <property type="entry name" value="S4_RNA-bd_sf"/>
</dbReference>
<dbReference type="InterPro" id="IPR054608">
    <property type="entry name" value="SYY-like_C"/>
</dbReference>
<dbReference type="InterPro" id="IPR002307">
    <property type="entry name" value="Tyr-tRNA-ligase"/>
</dbReference>
<dbReference type="InterPro" id="IPR024088">
    <property type="entry name" value="Tyr-tRNA-ligase_bac-type"/>
</dbReference>
<dbReference type="InterPro" id="IPR024107">
    <property type="entry name" value="Tyr-tRNA-ligase_bac_1"/>
</dbReference>
<dbReference type="NCBIfam" id="TIGR00234">
    <property type="entry name" value="tyrS"/>
    <property type="match status" value="1"/>
</dbReference>
<dbReference type="PANTHER" id="PTHR11766:SF0">
    <property type="entry name" value="TYROSINE--TRNA LIGASE, MITOCHONDRIAL"/>
    <property type="match status" value="1"/>
</dbReference>
<dbReference type="PANTHER" id="PTHR11766">
    <property type="entry name" value="TYROSYL-TRNA SYNTHETASE"/>
    <property type="match status" value="1"/>
</dbReference>
<dbReference type="Pfam" id="PF22421">
    <property type="entry name" value="SYY_C-terminal"/>
    <property type="match status" value="1"/>
</dbReference>
<dbReference type="Pfam" id="PF00579">
    <property type="entry name" value="tRNA-synt_1b"/>
    <property type="match status" value="1"/>
</dbReference>
<dbReference type="PRINTS" id="PR01040">
    <property type="entry name" value="TRNASYNTHTYR"/>
</dbReference>
<dbReference type="SMART" id="SM00363">
    <property type="entry name" value="S4"/>
    <property type="match status" value="1"/>
</dbReference>
<dbReference type="SUPFAM" id="SSF55174">
    <property type="entry name" value="Alpha-L RNA-binding motif"/>
    <property type="match status" value="1"/>
</dbReference>
<dbReference type="SUPFAM" id="SSF52374">
    <property type="entry name" value="Nucleotidylyl transferase"/>
    <property type="match status" value="1"/>
</dbReference>
<dbReference type="PROSITE" id="PS00178">
    <property type="entry name" value="AA_TRNA_LIGASE_I"/>
    <property type="match status" value="1"/>
</dbReference>
<dbReference type="PROSITE" id="PS50889">
    <property type="entry name" value="S4"/>
    <property type="match status" value="1"/>
</dbReference>
<reference key="1">
    <citation type="journal article" date="2010" name="Genome Biol.">
        <title>Structure and dynamics of the pan-genome of Streptococcus pneumoniae and closely related species.</title>
        <authorList>
            <person name="Donati C."/>
            <person name="Hiller N.L."/>
            <person name="Tettelin H."/>
            <person name="Muzzi A."/>
            <person name="Croucher N.J."/>
            <person name="Angiuoli S.V."/>
            <person name="Oggioni M."/>
            <person name="Dunning Hotopp J.C."/>
            <person name="Hu F.Z."/>
            <person name="Riley D.R."/>
            <person name="Covacci A."/>
            <person name="Mitchell T.J."/>
            <person name="Bentley S.D."/>
            <person name="Kilian M."/>
            <person name="Ehrlich G.D."/>
            <person name="Rappuoli R."/>
            <person name="Moxon E.R."/>
            <person name="Masignani V."/>
        </authorList>
    </citation>
    <scope>NUCLEOTIDE SEQUENCE [LARGE SCALE GENOMIC DNA]</scope>
    <source>
        <strain>P1031</strain>
    </source>
</reference>
<keyword id="KW-0030">Aminoacyl-tRNA synthetase</keyword>
<keyword id="KW-0067">ATP-binding</keyword>
<keyword id="KW-0963">Cytoplasm</keyword>
<keyword id="KW-0436">Ligase</keyword>
<keyword id="KW-0547">Nucleotide-binding</keyword>
<keyword id="KW-0648">Protein biosynthesis</keyword>
<keyword id="KW-0694">RNA-binding</keyword>
<name>SYY_STRZP</name>
<comment type="function">
    <text evidence="1">Catalyzes the attachment of tyrosine to tRNA(Tyr) in a two-step reaction: tyrosine is first activated by ATP to form Tyr-AMP and then transferred to the acceptor end of tRNA(Tyr).</text>
</comment>
<comment type="catalytic activity">
    <reaction evidence="1">
        <text>tRNA(Tyr) + L-tyrosine + ATP = L-tyrosyl-tRNA(Tyr) + AMP + diphosphate + H(+)</text>
        <dbReference type="Rhea" id="RHEA:10220"/>
        <dbReference type="Rhea" id="RHEA-COMP:9706"/>
        <dbReference type="Rhea" id="RHEA-COMP:9707"/>
        <dbReference type="ChEBI" id="CHEBI:15378"/>
        <dbReference type="ChEBI" id="CHEBI:30616"/>
        <dbReference type="ChEBI" id="CHEBI:33019"/>
        <dbReference type="ChEBI" id="CHEBI:58315"/>
        <dbReference type="ChEBI" id="CHEBI:78442"/>
        <dbReference type="ChEBI" id="CHEBI:78536"/>
        <dbReference type="ChEBI" id="CHEBI:456215"/>
        <dbReference type="EC" id="6.1.1.1"/>
    </reaction>
</comment>
<comment type="subunit">
    <text evidence="1">Homodimer.</text>
</comment>
<comment type="subcellular location">
    <subcellularLocation>
        <location evidence="1">Cytoplasm</location>
    </subcellularLocation>
</comment>
<comment type="similarity">
    <text evidence="1">Belongs to the class-I aminoacyl-tRNA synthetase family. TyrS type 1 subfamily.</text>
</comment>
<organism>
    <name type="scientific">Streptococcus pneumoniae (strain P1031)</name>
    <dbReference type="NCBI Taxonomy" id="488223"/>
    <lineage>
        <taxon>Bacteria</taxon>
        <taxon>Bacillati</taxon>
        <taxon>Bacillota</taxon>
        <taxon>Bacilli</taxon>
        <taxon>Lactobacillales</taxon>
        <taxon>Streptococcaceae</taxon>
        <taxon>Streptococcus</taxon>
    </lineage>
</organism>
<accession>C1CN46</accession>